<protein>
    <recommendedName>
        <fullName>Cytochrome c oxidase subunit 2</fullName>
        <ecNumber>7.1.1.9</ecNumber>
    </recommendedName>
    <alternativeName>
        <fullName>Cytochrome c oxidase polypeptide II</fullName>
    </alternativeName>
</protein>
<keyword id="KW-0186">Copper</keyword>
<keyword id="KW-0249">Electron transport</keyword>
<keyword id="KW-0460">Magnesium</keyword>
<keyword id="KW-0472">Membrane</keyword>
<keyword id="KW-0479">Metal-binding</keyword>
<keyword id="KW-0496">Mitochondrion</keyword>
<keyword id="KW-0999">Mitochondrion inner membrane</keyword>
<keyword id="KW-0597">Phosphoprotein</keyword>
<keyword id="KW-1185">Reference proteome</keyword>
<keyword id="KW-0679">Respiratory chain</keyword>
<keyword id="KW-1278">Translocase</keyword>
<keyword id="KW-0812">Transmembrane</keyword>
<keyword id="KW-1133">Transmembrane helix</keyword>
<keyword id="KW-0813">Transport</keyword>
<geneLocation type="mitochondrion"/>
<proteinExistence type="inferred from homology"/>
<evidence type="ECO:0000250" key="1">
    <source>
        <dbReference type="UniProtKB" id="P00403"/>
    </source>
</evidence>
<evidence type="ECO:0000250" key="2">
    <source>
        <dbReference type="UniProtKB" id="P00406"/>
    </source>
</evidence>
<evidence type="ECO:0000250" key="3">
    <source>
        <dbReference type="UniProtKB" id="P00410"/>
    </source>
</evidence>
<evidence type="ECO:0000250" key="4">
    <source>
        <dbReference type="UniProtKB" id="P68530"/>
    </source>
</evidence>
<evidence type="ECO:0000305" key="5"/>
<evidence type="ECO:0000312" key="6">
    <source>
        <dbReference type="Proteomes" id="UP000011712"/>
    </source>
</evidence>
<gene>
    <name type="primary">MT-CO2</name>
    <name type="synonym">COII</name>
    <name type="synonym">COX2</name>
    <name type="synonym">COXII</name>
    <name type="synonym">MTCO2</name>
</gene>
<sequence>MAYPFQLGFQDATSPIMEELLHFHDHTLMIVFLISSLVLYIISLMLTTKLTHTSTMDAQEVETIWTILPAIILILIALPSLRILYMMDEINNPSLTVKTMGHQWYWSYEYTDYEDLNFDSYMIPTQELKPGELRLLEVDNRVVLPMEMTIRMLISSEDVLHSWAVPSLGLKTDAIPGRLNQTTLMATRPGLYYGQCSEICGSNHSFMPIVLELVPLTYFEKWSASML</sequence>
<dbReference type="EC" id="7.1.1.9"/>
<dbReference type="EMBL" id="U20753">
    <property type="protein sequence ID" value="AAC48572.1"/>
    <property type="molecule type" value="Genomic_DNA"/>
</dbReference>
<dbReference type="EMBL" id="S75101">
    <property type="protein sequence ID" value="AAB32048.1"/>
    <property type="molecule type" value="Genomic_DNA"/>
</dbReference>
<dbReference type="PIR" id="T11405">
    <property type="entry name" value="T11405"/>
</dbReference>
<dbReference type="RefSeq" id="NP_008254.1">
    <property type="nucleotide sequence ID" value="NC_001700.1"/>
</dbReference>
<dbReference type="SMR" id="P48890"/>
<dbReference type="FunCoup" id="P48890">
    <property type="interactions" value="9"/>
</dbReference>
<dbReference type="STRING" id="9685.ENSFCAP00000025712"/>
<dbReference type="PaxDb" id="9685-ENSFCAP00000025712"/>
<dbReference type="Ensembl" id="ENSFCAT00000032646.1">
    <property type="protein sequence ID" value="ENSFCAP00000025712.1"/>
    <property type="gene ID" value="ENSFCAG00000032061.1"/>
</dbReference>
<dbReference type="GeneID" id="807936"/>
<dbReference type="KEGG" id="fca:807936"/>
<dbReference type="CTD" id="4513"/>
<dbReference type="VGNC" id="VGNC:80931">
    <property type="gene designation" value="MT-CO2"/>
</dbReference>
<dbReference type="eggNOG" id="KOG4767">
    <property type="taxonomic scope" value="Eukaryota"/>
</dbReference>
<dbReference type="GeneTree" id="ENSGT00390000017410"/>
<dbReference type="HOGENOM" id="CLU_036876_2_3_1"/>
<dbReference type="InParanoid" id="P48890"/>
<dbReference type="OMA" id="WSYEYTD"/>
<dbReference type="OrthoDB" id="539285at2759"/>
<dbReference type="Proteomes" id="UP000011712">
    <property type="component" value="Mitochondrion"/>
</dbReference>
<dbReference type="Bgee" id="ENSFCAG00000032061">
    <property type="expression patterns" value="Expressed in zone of skin and 10 other cell types or tissues"/>
</dbReference>
<dbReference type="GO" id="GO:0005743">
    <property type="term" value="C:mitochondrial inner membrane"/>
    <property type="evidence" value="ECO:0007669"/>
    <property type="project" value="UniProtKB-SubCell"/>
</dbReference>
<dbReference type="GO" id="GO:0045277">
    <property type="term" value="C:respiratory chain complex IV"/>
    <property type="evidence" value="ECO:0000250"/>
    <property type="project" value="UniProtKB"/>
</dbReference>
<dbReference type="GO" id="GO:0005507">
    <property type="term" value="F:copper ion binding"/>
    <property type="evidence" value="ECO:0007669"/>
    <property type="project" value="InterPro"/>
</dbReference>
<dbReference type="GO" id="GO:0004129">
    <property type="term" value="F:cytochrome-c oxidase activity"/>
    <property type="evidence" value="ECO:0007669"/>
    <property type="project" value="UniProtKB-EC"/>
</dbReference>
<dbReference type="GO" id="GO:0042773">
    <property type="term" value="P:ATP synthesis coupled electron transport"/>
    <property type="evidence" value="ECO:0000318"/>
    <property type="project" value="GO_Central"/>
</dbReference>
<dbReference type="CDD" id="cd13912">
    <property type="entry name" value="CcO_II_C"/>
    <property type="match status" value="1"/>
</dbReference>
<dbReference type="FunFam" id="1.10.287.90:FF:000001">
    <property type="entry name" value="Cytochrome c oxidase subunit 2"/>
    <property type="match status" value="1"/>
</dbReference>
<dbReference type="FunFam" id="2.60.40.420:FF:000001">
    <property type="entry name" value="Cytochrome c oxidase subunit 2"/>
    <property type="match status" value="1"/>
</dbReference>
<dbReference type="Gene3D" id="1.10.287.90">
    <property type="match status" value="1"/>
</dbReference>
<dbReference type="Gene3D" id="2.60.40.420">
    <property type="entry name" value="Cupredoxins - blue copper proteins"/>
    <property type="match status" value="1"/>
</dbReference>
<dbReference type="InterPro" id="IPR045187">
    <property type="entry name" value="CcO_II"/>
</dbReference>
<dbReference type="InterPro" id="IPR002429">
    <property type="entry name" value="CcO_II-like_C"/>
</dbReference>
<dbReference type="InterPro" id="IPR034210">
    <property type="entry name" value="CcO_II_C"/>
</dbReference>
<dbReference type="InterPro" id="IPR001505">
    <property type="entry name" value="Copper_CuA"/>
</dbReference>
<dbReference type="InterPro" id="IPR008972">
    <property type="entry name" value="Cupredoxin"/>
</dbReference>
<dbReference type="InterPro" id="IPR014222">
    <property type="entry name" value="Cyt_c_oxidase_su2"/>
</dbReference>
<dbReference type="InterPro" id="IPR011759">
    <property type="entry name" value="Cyt_c_oxidase_su2_TM_dom"/>
</dbReference>
<dbReference type="InterPro" id="IPR036257">
    <property type="entry name" value="Cyt_c_oxidase_su2_TM_sf"/>
</dbReference>
<dbReference type="NCBIfam" id="TIGR02866">
    <property type="entry name" value="CoxB"/>
    <property type="match status" value="1"/>
</dbReference>
<dbReference type="PANTHER" id="PTHR22888:SF9">
    <property type="entry name" value="CYTOCHROME C OXIDASE SUBUNIT 2"/>
    <property type="match status" value="1"/>
</dbReference>
<dbReference type="PANTHER" id="PTHR22888">
    <property type="entry name" value="CYTOCHROME C OXIDASE, SUBUNIT II"/>
    <property type="match status" value="1"/>
</dbReference>
<dbReference type="Pfam" id="PF00116">
    <property type="entry name" value="COX2"/>
    <property type="match status" value="1"/>
</dbReference>
<dbReference type="Pfam" id="PF02790">
    <property type="entry name" value="COX2_TM"/>
    <property type="match status" value="1"/>
</dbReference>
<dbReference type="PRINTS" id="PR01166">
    <property type="entry name" value="CYCOXIDASEII"/>
</dbReference>
<dbReference type="SUPFAM" id="SSF49503">
    <property type="entry name" value="Cupredoxins"/>
    <property type="match status" value="1"/>
</dbReference>
<dbReference type="SUPFAM" id="SSF81464">
    <property type="entry name" value="Cytochrome c oxidase subunit II-like, transmembrane region"/>
    <property type="match status" value="1"/>
</dbReference>
<dbReference type="PROSITE" id="PS00078">
    <property type="entry name" value="COX2"/>
    <property type="match status" value="1"/>
</dbReference>
<dbReference type="PROSITE" id="PS50857">
    <property type="entry name" value="COX2_CUA"/>
    <property type="match status" value="1"/>
</dbReference>
<dbReference type="PROSITE" id="PS50999">
    <property type="entry name" value="COX2_TM"/>
    <property type="match status" value="1"/>
</dbReference>
<comment type="function">
    <text evidence="3">Component of the cytochrome c oxidase, the last enzyme in the mitochondrial electron transport chain which drives oxidative phosphorylation. The respiratory chain contains 3 multisubunit complexes succinate dehydrogenase (complex II, CII), ubiquinol-cytochrome c oxidoreductase (cytochrome b-c1 complex, complex III, CIII) and cytochrome c oxidase (complex IV, CIV), that cooperate to transfer electrons derived from NADH and succinate to molecular oxygen, creating an electrochemical gradient over the inner membrane that drives transmembrane transport and the ATP synthase. Cytochrome c oxidase is the component of the respiratory chain that catalyzes the reduction of oxygen to water. Electrons originating from reduced cytochrome c in the intermembrane space (IMS) are transferred via the dinuclear copper A center (CU(A)) of subunit 2 and heme A of subunit 1 to the active site in subunit 1, a binuclear center (BNC) formed by heme A3 and copper B (CU(B)). The BNC reduces molecular oxygen to 2 water molecules using 4 electrons from cytochrome c in the IMS and 4 protons from the mitochondrial matrix.</text>
</comment>
<comment type="catalytic activity">
    <reaction evidence="3">
        <text>4 Fe(II)-[cytochrome c] + O2 + 8 H(+)(in) = 4 Fe(III)-[cytochrome c] + 2 H2O + 4 H(+)(out)</text>
        <dbReference type="Rhea" id="RHEA:11436"/>
        <dbReference type="Rhea" id="RHEA-COMP:10350"/>
        <dbReference type="Rhea" id="RHEA-COMP:14399"/>
        <dbReference type="ChEBI" id="CHEBI:15377"/>
        <dbReference type="ChEBI" id="CHEBI:15378"/>
        <dbReference type="ChEBI" id="CHEBI:15379"/>
        <dbReference type="ChEBI" id="CHEBI:29033"/>
        <dbReference type="ChEBI" id="CHEBI:29034"/>
        <dbReference type="EC" id="7.1.1.9"/>
    </reaction>
    <physiologicalReaction direction="left-to-right" evidence="3">
        <dbReference type="Rhea" id="RHEA:11437"/>
    </physiologicalReaction>
</comment>
<comment type="cofactor">
    <cofactor evidence="4">
        <name>Cu cation</name>
        <dbReference type="ChEBI" id="CHEBI:23378"/>
    </cofactor>
    <text evidence="4">Binds a dinuclear copper A center per subunit.</text>
</comment>
<comment type="subunit">
    <text evidence="1 4">Component of the cytochrome c oxidase (complex IV, CIV), a multisubunit enzyme composed of 14 subunits. The complex is composed of a catalytic core of 3 subunits MT-CO1, MT-CO2 and MT-CO3, encoded in the mitochondrial DNA, and 11 supernumerary subunits COX4I, COX5A, COX5B, COX6A, COX6B, COX6C, COX7A, COX7B, COX7C, COX8 and NDUFA4, which are encoded in the nuclear genome. The complex exists as a monomer or a dimer and forms supercomplexes (SCs) in the inner mitochondrial membrane with NADH-ubiquinone oxidoreductase (complex I, CI) and ubiquinol-cytochrome c oxidoreductase (cytochrome b-c1 complex, complex III, CIII), resulting in different assemblies (supercomplex SCI(1)III(2)IV(1) and megacomplex MCI(2)III(2)IV(2)) (By similarity). Found in a complex with TMEM177, COA6, COX18, COX20, SCO1 and SCO2. Interacts with TMEM177 in a COX20-dependent manner. Interacts with COX20. Interacts with COX16 (By similarity).</text>
</comment>
<comment type="subcellular location">
    <subcellularLocation>
        <location evidence="4">Mitochondrion inner membrane</location>
        <topology evidence="4">Multi-pass membrane protein</topology>
    </subcellularLocation>
</comment>
<comment type="similarity">
    <text evidence="5">Belongs to the cytochrome c oxidase subunit 2 family.</text>
</comment>
<feature type="chain" id="PRO_0000183596" description="Cytochrome c oxidase subunit 2">
    <location>
        <begin position="1"/>
        <end position="227"/>
    </location>
</feature>
<feature type="topological domain" description="Mitochondrial intermembrane" evidence="4">
    <location>
        <begin position="1"/>
        <end position="14"/>
    </location>
</feature>
<feature type="transmembrane region" description="Helical; Name=I" evidence="4">
    <location>
        <begin position="15"/>
        <end position="45"/>
    </location>
</feature>
<feature type="topological domain" description="Mitochondrial matrix" evidence="4">
    <location>
        <begin position="46"/>
        <end position="59"/>
    </location>
</feature>
<feature type="transmembrane region" description="Helical; Name=II" evidence="4">
    <location>
        <begin position="60"/>
        <end position="87"/>
    </location>
</feature>
<feature type="topological domain" description="Mitochondrial intermembrane" evidence="4">
    <location>
        <begin position="88"/>
        <end position="227"/>
    </location>
</feature>
<feature type="binding site" evidence="4">
    <location>
        <position position="161"/>
    </location>
    <ligand>
        <name>Cu cation</name>
        <dbReference type="ChEBI" id="CHEBI:23378"/>
        <label>A1</label>
    </ligand>
</feature>
<feature type="binding site" evidence="4">
    <location>
        <position position="196"/>
    </location>
    <ligand>
        <name>Cu cation</name>
        <dbReference type="ChEBI" id="CHEBI:23378"/>
        <label>A1</label>
    </ligand>
</feature>
<feature type="binding site" evidence="4">
    <location>
        <position position="196"/>
    </location>
    <ligand>
        <name>Cu cation</name>
        <dbReference type="ChEBI" id="CHEBI:23378"/>
        <label>A2</label>
    </ligand>
</feature>
<feature type="binding site" evidence="4">
    <location>
        <position position="198"/>
    </location>
    <ligand>
        <name>Cu cation</name>
        <dbReference type="ChEBI" id="CHEBI:23378"/>
        <label>A2</label>
    </ligand>
</feature>
<feature type="binding site" evidence="4">
    <location>
        <position position="198"/>
    </location>
    <ligand>
        <name>Mg(2+)</name>
        <dbReference type="ChEBI" id="CHEBI:18420"/>
        <note>ligand shared with MT-CO1</note>
    </ligand>
</feature>
<feature type="binding site" evidence="4">
    <location>
        <position position="200"/>
    </location>
    <ligand>
        <name>Cu cation</name>
        <dbReference type="ChEBI" id="CHEBI:23378"/>
        <label>A1</label>
    </ligand>
</feature>
<feature type="binding site" evidence="4">
    <location>
        <position position="200"/>
    </location>
    <ligand>
        <name>Cu cation</name>
        <dbReference type="ChEBI" id="CHEBI:23378"/>
        <label>A2</label>
    </ligand>
</feature>
<feature type="binding site" evidence="4">
    <location>
        <position position="204"/>
    </location>
    <ligand>
        <name>Cu cation</name>
        <dbReference type="ChEBI" id="CHEBI:23378"/>
        <label>A2</label>
    </ligand>
</feature>
<feature type="binding site" evidence="4">
    <location>
        <position position="207"/>
    </location>
    <ligand>
        <name>Cu cation</name>
        <dbReference type="ChEBI" id="CHEBI:23378"/>
        <label>A1</label>
    </ligand>
</feature>
<feature type="modified residue" description="Phosphotyrosine" evidence="2">
    <location>
        <position position="218"/>
    </location>
</feature>
<organism>
    <name type="scientific">Felis catus</name>
    <name type="common">Cat</name>
    <name type="synonym">Felis silvestris catus</name>
    <dbReference type="NCBI Taxonomy" id="9685"/>
    <lineage>
        <taxon>Eukaryota</taxon>
        <taxon>Metazoa</taxon>
        <taxon>Chordata</taxon>
        <taxon>Craniata</taxon>
        <taxon>Vertebrata</taxon>
        <taxon>Euteleostomi</taxon>
        <taxon>Mammalia</taxon>
        <taxon>Eutheria</taxon>
        <taxon>Laurasiatheria</taxon>
        <taxon>Carnivora</taxon>
        <taxon>Feliformia</taxon>
        <taxon>Felidae</taxon>
        <taxon>Felinae</taxon>
        <taxon>Felis</taxon>
    </lineage>
</organism>
<name>COX2_FELCA</name>
<accession>P48890</accession>
<reference key="1">
    <citation type="journal article" date="1996" name="Genomics">
        <title>Complete nucleotide sequences of the domestic cat (Felis catus) mitochondrial genome and a transposed mtDNA tandem repeat (Numt) in the nuclear genome.</title>
        <authorList>
            <person name="Lopez J.V."/>
            <person name="Cevario S."/>
            <person name="O'Brien S.J."/>
        </authorList>
    </citation>
    <scope>NUCLEOTIDE SEQUENCE [LARGE SCALE GENOMIC DNA]</scope>
    <source>
        <strain evidence="6">Abyssinian</strain>
        <tissue>Blood</tissue>
    </source>
</reference>
<reference key="2">
    <citation type="journal article" date="1994" name="J. Mol. Evol.">
        <title>Numt, a recent transfer and tandem amplification of mitochondrial DNA to the nuclear genome of the domestic cat.</title>
        <authorList>
            <person name="Lopez J.V."/>
            <person name="Yuhki N."/>
            <person name="Masuda R."/>
            <person name="Modi W."/>
            <person name="O'Brien S.J."/>
        </authorList>
    </citation>
    <scope>NUCLEOTIDE SEQUENCE [GENOMIC DNA] OF 1-83</scope>
</reference>